<organism>
    <name type="scientific">Listeria innocua serovar 6a (strain ATCC BAA-680 / CLIP 11262)</name>
    <dbReference type="NCBI Taxonomy" id="272626"/>
    <lineage>
        <taxon>Bacteria</taxon>
        <taxon>Bacillati</taxon>
        <taxon>Bacillota</taxon>
        <taxon>Bacilli</taxon>
        <taxon>Bacillales</taxon>
        <taxon>Listeriaceae</taxon>
        <taxon>Listeria</taxon>
    </lineage>
</organism>
<gene>
    <name evidence="1" type="primary">mecA</name>
    <name type="ordered locus">lin2294</name>
</gene>
<reference key="1">
    <citation type="journal article" date="2001" name="Science">
        <title>Comparative genomics of Listeria species.</title>
        <authorList>
            <person name="Glaser P."/>
            <person name="Frangeul L."/>
            <person name="Buchrieser C."/>
            <person name="Rusniok C."/>
            <person name="Amend A."/>
            <person name="Baquero F."/>
            <person name="Berche P."/>
            <person name="Bloecker H."/>
            <person name="Brandt P."/>
            <person name="Chakraborty T."/>
            <person name="Charbit A."/>
            <person name="Chetouani F."/>
            <person name="Couve E."/>
            <person name="de Daruvar A."/>
            <person name="Dehoux P."/>
            <person name="Domann E."/>
            <person name="Dominguez-Bernal G."/>
            <person name="Duchaud E."/>
            <person name="Durant L."/>
            <person name="Dussurget O."/>
            <person name="Entian K.-D."/>
            <person name="Fsihi H."/>
            <person name="Garcia-del Portillo F."/>
            <person name="Garrido P."/>
            <person name="Gautier L."/>
            <person name="Goebel W."/>
            <person name="Gomez-Lopez N."/>
            <person name="Hain T."/>
            <person name="Hauf J."/>
            <person name="Jackson D."/>
            <person name="Jones L.-M."/>
            <person name="Kaerst U."/>
            <person name="Kreft J."/>
            <person name="Kuhn M."/>
            <person name="Kunst F."/>
            <person name="Kurapkat G."/>
            <person name="Madueno E."/>
            <person name="Maitournam A."/>
            <person name="Mata Vicente J."/>
            <person name="Ng E."/>
            <person name="Nedjari H."/>
            <person name="Nordsiek G."/>
            <person name="Novella S."/>
            <person name="de Pablos B."/>
            <person name="Perez-Diaz J.-C."/>
            <person name="Purcell R."/>
            <person name="Remmel B."/>
            <person name="Rose M."/>
            <person name="Schlueter T."/>
            <person name="Simoes N."/>
            <person name="Tierrez A."/>
            <person name="Vazquez-Boland J.-A."/>
            <person name="Voss H."/>
            <person name="Wehland J."/>
            <person name="Cossart P."/>
        </authorList>
    </citation>
    <scope>NUCLEOTIDE SEQUENCE [LARGE SCALE GENOMIC DNA]</scope>
    <source>
        <strain>ATCC BAA-680 / CLIP 11262</strain>
    </source>
</reference>
<accession>Q929I1</accession>
<feature type="chain" id="PRO_0000212272" description="Adapter protein MecA">
    <location>
        <begin position="1"/>
        <end position="217"/>
    </location>
</feature>
<sequence>MEIERINEDTIKFYISYLDLEERGFNQEDVWYDREKSEELFWDMMDELKYEEEFSPEGPLWIQVQALKHGLEVFVTKATIGGKGEDGFDVTLSSPDELAEEKIEKLLEENFNPVKKESLGEDDTLEFILEFRDFEDLISLSRATGLENLVTKLYSYQGKYYLNVEFPENKYDESNIDNAVSILLEYGLESNLTGYMLAEYGKVIFDVPALKQVRKYF</sequence>
<name>MECA_LISIN</name>
<dbReference type="EMBL" id="AL596171">
    <property type="protein sequence ID" value="CAC97522.1"/>
    <property type="molecule type" value="Genomic_DNA"/>
</dbReference>
<dbReference type="PIR" id="AB1719">
    <property type="entry name" value="AB1719"/>
</dbReference>
<dbReference type="RefSeq" id="WP_003763512.1">
    <property type="nucleotide sequence ID" value="NC_003212.1"/>
</dbReference>
<dbReference type="SMR" id="Q929I1"/>
<dbReference type="STRING" id="272626.gene:17566656"/>
<dbReference type="GeneID" id="93235638"/>
<dbReference type="KEGG" id="lin:mecA"/>
<dbReference type="eggNOG" id="COG4862">
    <property type="taxonomic scope" value="Bacteria"/>
</dbReference>
<dbReference type="HOGENOM" id="CLU_071496_2_1_9"/>
<dbReference type="OrthoDB" id="2360201at2"/>
<dbReference type="Proteomes" id="UP000002513">
    <property type="component" value="Chromosome"/>
</dbReference>
<dbReference type="GO" id="GO:0030674">
    <property type="term" value="F:protein-macromolecule adaptor activity"/>
    <property type="evidence" value="ECO:0007669"/>
    <property type="project" value="UniProtKB-UniRule"/>
</dbReference>
<dbReference type="Gene3D" id="3.30.70.1950">
    <property type="match status" value="1"/>
</dbReference>
<dbReference type="HAMAP" id="MF_01124">
    <property type="entry name" value="MecA"/>
    <property type="match status" value="1"/>
</dbReference>
<dbReference type="InterPro" id="IPR038471">
    <property type="entry name" value="MecA_C_sf"/>
</dbReference>
<dbReference type="InterPro" id="IPR008681">
    <property type="entry name" value="Neg-reg_MecA"/>
</dbReference>
<dbReference type="NCBIfam" id="NF002644">
    <property type="entry name" value="PRK02315.1-5"/>
    <property type="match status" value="1"/>
</dbReference>
<dbReference type="PANTHER" id="PTHR39161">
    <property type="entry name" value="ADAPTER PROTEIN MECA"/>
    <property type="match status" value="1"/>
</dbReference>
<dbReference type="PANTHER" id="PTHR39161:SF1">
    <property type="entry name" value="ADAPTER PROTEIN MECA 1"/>
    <property type="match status" value="1"/>
</dbReference>
<dbReference type="Pfam" id="PF05389">
    <property type="entry name" value="MecA"/>
    <property type="match status" value="1"/>
</dbReference>
<dbReference type="PIRSF" id="PIRSF029008">
    <property type="entry name" value="MecA"/>
    <property type="match status" value="1"/>
</dbReference>
<evidence type="ECO:0000255" key="1">
    <source>
        <dbReference type="HAMAP-Rule" id="MF_01124"/>
    </source>
</evidence>
<protein>
    <recommendedName>
        <fullName evidence="1">Adapter protein MecA</fullName>
    </recommendedName>
</protein>
<comment type="function">
    <text evidence="1">Enables the recognition and targeting of unfolded and aggregated proteins to the ClpC protease or to other proteins involved in proteolysis.</text>
</comment>
<comment type="subunit">
    <text evidence="1">Homodimer.</text>
</comment>
<comment type="domain">
    <text>The N-terminal domain probably binds unfolded/aggregated proteins; the C-terminal domain interacts with ClpC.</text>
</comment>
<comment type="similarity">
    <text evidence="1">Belongs to the MecA family.</text>
</comment>
<proteinExistence type="inferred from homology"/>